<name>ATPG_YERE8</name>
<proteinExistence type="inferred from homology"/>
<reference key="1">
    <citation type="journal article" date="2006" name="PLoS Genet.">
        <title>The complete genome sequence and comparative genome analysis of the high pathogenicity Yersinia enterocolitica strain 8081.</title>
        <authorList>
            <person name="Thomson N.R."/>
            <person name="Howard S."/>
            <person name="Wren B.W."/>
            <person name="Holden M.T.G."/>
            <person name="Crossman L."/>
            <person name="Challis G.L."/>
            <person name="Churcher C."/>
            <person name="Mungall K."/>
            <person name="Brooks K."/>
            <person name="Chillingworth T."/>
            <person name="Feltwell T."/>
            <person name="Abdellah Z."/>
            <person name="Hauser H."/>
            <person name="Jagels K."/>
            <person name="Maddison M."/>
            <person name="Moule S."/>
            <person name="Sanders M."/>
            <person name="Whitehead S."/>
            <person name="Quail M.A."/>
            <person name="Dougan G."/>
            <person name="Parkhill J."/>
            <person name="Prentice M.B."/>
        </authorList>
    </citation>
    <scope>NUCLEOTIDE SEQUENCE [LARGE SCALE GENOMIC DNA]</scope>
    <source>
        <strain>NCTC 13174 / 8081</strain>
    </source>
</reference>
<gene>
    <name evidence="1" type="primary">atpG</name>
    <name type="ordered locus">YE4207</name>
</gene>
<sequence>MAGAKEIRSKIASVQNTQKITKAMEMVAASKMRKSQERMAASRPYAETMRSVIGHLALGNLEYKHPYLEERDVKRVGYLVVSTDRGLCGGLNINLFKKLLAEMKGWSEKGVECDLALIGSKAASFFGSVGGKIVAQVTGMGDNPSLSELIGPVKVMLQAYDEGRLDKLYIVNNKFINTMSQEPRIMQLLPLPPAEDGELKKKSWDYLYEPDPKALLDTLLRRYVESQVYQGVVENLASEQAARMVAMKAATDNGGSLIKELQLVYNKARQASITQELTEIVGGASAV</sequence>
<evidence type="ECO:0000255" key="1">
    <source>
        <dbReference type="HAMAP-Rule" id="MF_00815"/>
    </source>
</evidence>
<dbReference type="EMBL" id="AM286415">
    <property type="protein sequence ID" value="CAL14221.1"/>
    <property type="molecule type" value="Genomic_DNA"/>
</dbReference>
<dbReference type="RefSeq" id="WP_011817476.1">
    <property type="nucleotide sequence ID" value="NC_008800.1"/>
</dbReference>
<dbReference type="RefSeq" id="YP_001008339.1">
    <property type="nucleotide sequence ID" value="NC_008800.1"/>
</dbReference>
<dbReference type="SMR" id="A1JTC7"/>
<dbReference type="GeneID" id="93971157"/>
<dbReference type="KEGG" id="yen:YE4207"/>
<dbReference type="PATRIC" id="fig|393305.7.peg.4473"/>
<dbReference type="eggNOG" id="COG0224">
    <property type="taxonomic scope" value="Bacteria"/>
</dbReference>
<dbReference type="HOGENOM" id="CLU_050669_0_1_6"/>
<dbReference type="OrthoDB" id="9812769at2"/>
<dbReference type="Proteomes" id="UP000000642">
    <property type="component" value="Chromosome"/>
</dbReference>
<dbReference type="GO" id="GO:0005886">
    <property type="term" value="C:plasma membrane"/>
    <property type="evidence" value="ECO:0007669"/>
    <property type="project" value="UniProtKB-SubCell"/>
</dbReference>
<dbReference type="GO" id="GO:0045259">
    <property type="term" value="C:proton-transporting ATP synthase complex"/>
    <property type="evidence" value="ECO:0007669"/>
    <property type="project" value="UniProtKB-KW"/>
</dbReference>
<dbReference type="GO" id="GO:0005524">
    <property type="term" value="F:ATP binding"/>
    <property type="evidence" value="ECO:0007669"/>
    <property type="project" value="UniProtKB-UniRule"/>
</dbReference>
<dbReference type="GO" id="GO:0046933">
    <property type="term" value="F:proton-transporting ATP synthase activity, rotational mechanism"/>
    <property type="evidence" value="ECO:0007669"/>
    <property type="project" value="UniProtKB-UniRule"/>
</dbReference>
<dbReference type="GO" id="GO:0042777">
    <property type="term" value="P:proton motive force-driven plasma membrane ATP synthesis"/>
    <property type="evidence" value="ECO:0007669"/>
    <property type="project" value="UniProtKB-UniRule"/>
</dbReference>
<dbReference type="CDD" id="cd12151">
    <property type="entry name" value="F1-ATPase_gamma"/>
    <property type="match status" value="1"/>
</dbReference>
<dbReference type="FunFam" id="1.10.287.80:FF:000005">
    <property type="entry name" value="ATP synthase gamma chain"/>
    <property type="match status" value="2"/>
</dbReference>
<dbReference type="FunFam" id="3.40.1380.10:FF:000001">
    <property type="entry name" value="ATP synthase gamma chain"/>
    <property type="match status" value="1"/>
</dbReference>
<dbReference type="Gene3D" id="3.40.1380.10">
    <property type="match status" value="1"/>
</dbReference>
<dbReference type="Gene3D" id="1.10.287.80">
    <property type="entry name" value="ATP synthase, gamma subunit, helix hairpin domain"/>
    <property type="match status" value="1"/>
</dbReference>
<dbReference type="HAMAP" id="MF_00815">
    <property type="entry name" value="ATP_synth_gamma_bact"/>
    <property type="match status" value="1"/>
</dbReference>
<dbReference type="InterPro" id="IPR035968">
    <property type="entry name" value="ATP_synth_F1_ATPase_gsu"/>
</dbReference>
<dbReference type="InterPro" id="IPR000131">
    <property type="entry name" value="ATP_synth_F1_gsu"/>
</dbReference>
<dbReference type="InterPro" id="IPR023632">
    <property type="entry name" value="ATP_synth_F1_gsu_CS"/>
</dbReference>
<dbReference type="NCBIfam" id="TIGR01146">
    <property type="entry name" value="ATPsyn_F1gamma"/>
    <property type="match status" value="1"/>
</dbReference>
<dbReference type="NCBIfam" id="NF004144">
    <property type="entry name" value="PRK05621.1-1"/>
    <property type="match status" value="1"/>
</dbReference>
<dbReference type="PANTHER" id="PTHR11693">
    <property type="entry name" value="ATP SYNTHASE GAMMA CHAIN"/>
    <property type="match status" value="1"/>
</dbReference>
<dbReference type="PANTHER" id="PTHR11693:SF22">
    <property type="entry name" value="ATP SYNTHASE SUBUNIT GAMMA, MITOCHONDRIAL"/>
    <property type="match status" value="1"/>
</dbReference>
<dbReference type="Pfam" id="PF00231">
    <property type="entry name" value="ATP-synt"/>
    <property type="match status" value="1"/>
</dbReference>
<dbReference type="PRINTS" id="PR00126">
    <property type="entry name" value="ATPASEGAMMA"/>
</dbReference>
<dbReference type="SUPFAM" id="SSF52943">
    <property type="entry name" value="ATP synthase (F1-ATPase), gamma subunit"/>
    <property type="match status" value="1"/>
</dbReference>
<dbReference type="PROSITE" id="PS00153">
    <property type="entry name" value="ATPASE_GAMMA"/>
    <property type="match status" value="1"/>
</dbReference>
<feature type="chain" id="PRO_1000053377" description="ATP synthase gamma chain">
    <location>
        <begin position="1"/>
        <end position="287"/>
    </location>
</feature>
<keyword id="KW-0066">ATP synthesis</keyword>
<keyword id="KW-0997">Cell inner membrane</keyword>
<keyword id="KW-1003">Cell membrane</keyword>
<keyword id="KW-0139">CF(1)</keyword>
<keyword id="KW-0375">Hydrogen ion transport</keyword>
<keyword id="KW-0406">Ion transport</keyword>
<keyword id="KW-0472">Membrane</keyword>
<keyword id="KW-0813">Transport</keyword>
<protein>
    <recommendedName>
        <fullName evidence="1">ATP synthase gamma chain</fullName>
    </recommendedName>
    <alternativeName>
        <fullName evidence="1">ATP synthase F1 sector gamma subunit</fullName>
    </alternativeName>
    <alternativeName>
        <fullName evidence="1">F-ATPase gamma subunit</fullName>
    </alternativeName>
</protein>
<organism>
    <name type="scientific">Yersinia enterocolitica serotype O:8 / biotype 1B (strain NCTC 13174 / 8081)</name>
    <dbReference type="NCBI Taxonomy" id="393305"/>
    <lineage>
        <taxon>Bacteria</taxon>
        <taxon>Pseudomonadati</taxon>
        <taxon>Pseudomonadota</taxon>
        <taxon>Gammaproteobacteria</taxon>
        <taxon>Enterobacterales</taxon>
        <taxon>Yersiniaceae</taxon>
        <taxon>Yersinia</taxon>
    </lineage>
</organism>
<comment type="function">
    <text evidence="1">Produces ATP from ADP in the presence of a proton gradient across the membrane. The gamma chain is believed to be important in regulating ATPase activity and the flow of protons through the CF(0) complex.</text>
</comment>
<comment type="subunit">
    <text evidence="1">F-type ATPases have 2 components, CF(1) - the catalytic core - and CF(0) - the membrane proton channel. CF(1) has five subunits: alpha(3), beta(3), gamma(1), delta(1), epsilon(1). CF(0) has three main subunits: a, b and c.</text>
</comment>
<comment type="subcellular location">
    <subcellularLocation>
        <location evidence="1">Cell inner membrane</location>
        <topology evidence="1">Peripheral membrane protein</topology>
    </subcellularLocation>
</comment>
<comment type="similarity">
    <text evidence="1">Belongs to the ATPase gamma chain family.</text>
</comment>
<accession>A1JTC7</accession>